<keyword id="KW-0007">Acetylation</keyword>
<keyword id="KW-0966">Cell projection</keyword>
<keyword id="KW-0186">Copper</keyword>
<keyword id="KW-0963">Cytoplasm</keyword>
<keyword id="KW-0472">Membrane</keyword>
<keyword id="KW-0479">Metal-binding</keyword>
<keyword id="KW-0539">Nucleus</keyword>
<keyword id="KW-0597">Phosphoprotein</keyword>
<keyword id="KW-0677">Repeat</keyword>
<keyword id="KW-0964">Secreted</keyword>
<keyword id="KW-0770">Synapse</keyword>
<keyword id="KW-0832">Ubl conjugation</keyword>
<proteinExistence type="inferred from homology"/>
<comment type="function">
    <text evidence="4">Neuronal protein that plays several roles in synaptic activity such as regulation of synaptic vesicle trafficking and subsequent neurotransmitter release (By similarity). Participates as a monomer in synaptic vesicle exocytosis by enhancing vesicle priming, fusion and dilation of exocytotic fusion pores (By similarity). Mechanistically, acts by increasing local Ca(2+) release from microdomains which is essential for the enhancement of ATP-induced exocytosis (By similarity). Also acts as a molecular chaperone in its multimeric membrane-bound state, assisting in the folding of synaptic fusion components called SNAREs (Soluble NSF Attachment Protein REceptors) at presynaptic plasma membrane in conjunction with cysteine string protein-alpha/DNAJC5 (By similarity). This chaperone activity is important to sustain normal SNARE-complex assembly during aging (By similarity). Also plays a role in the regulation of the dopamine neurotransmission by associating with the dopamine transporter (DAT1) and thereby modulating its activity (By similarity).</text>
</comment>
<comment type="subunit">
    <text evidence="2 4">Soluble monomer. Homotetramer. A dynamic intracellular population of tetramers and monomers coexists normally and the tetramer plays an essential role in maintaining homeostasis (By similarity). Interacts with UCHL1 (By similarity). Interacts with phospholipase D and histones. Interacts (via N-terminus) with synphilin-1/SNCAIP; this interaction promotes formation of SNCA inclusions in the cytoplasm. Interacts with CALM1. Interacts with STXBP1; this interaction controls SNCA self-replicating aggregation. Interacts with SNARE components VAMP2 and SNAP25; these interactions allows SNARE complex assembly and integrity (By similarity). Interacts with RPH3A and RAB3A (By similarity). Interacts with SERF1A; this interaction promotes the aggregation of SNCA (By similarity). Interacts with SEPTIN4 (By similarity). Interacts with DDX10; this interaction causes DDX10 mislocalization to the nucleoplasm and cytoplasmic inclusions (By similarity).</text>
</comment>
<comment type="subcellular location">
    <subcellularLocation>
        <location evidence="4">Cytoplasm</location>
        <location evidence="4">Cytosol</location>
    </subcellularLocation>
    <subcellularLocation>
        <location evidence="4">Membrane</location>
    </subcellularLocation>
    <subcellularLocation>
        <location evidence="4">Nucleus</location>
    </subcellularLocation>
    <subcellularLocation>
        <location evidence="4">Synapse</location>
    </subcellularLocation>
    <subcellularLocation>
        <location evidence="4">Secreted</location>
    </subcellularLocation>
    <subcellularLocation>
        <location evidence="2">Cell projection</location>
        <location evidence="2">Axon</location>
    </subcellularLocation>
    <text evidence="2 4">Membrane-bound in dopaminergic neurons (By similarity). Expressed and colocalized with SEPTIN4 in dopaminergic axon terminals, especially at the varicosities (By similarity).</text>
</comment>
<comment type="PTM">
    <text evidence="4">Phosphorylated, predominantly on serine residues. Phosphorylated on Tyr-125 upon osmotic stress.</text>
</comment>
<comment type="PTM">
    <text evidence="3">Ubiquitinated. The predominant conjugate is the diubiquitinated form.</text>
</comment>
<comment type="PTM">
    <text evidence="4">Acetylation at Met-1 seems to be important for proper folding and native oligomeric structure.</text>
</comment>
<comment type="similarity">
    <text evidence="6">Belongs to the synuclein family.</text>
</comment>
<sequence>MDVFMKGLSKAKEGVVAAAEKTKQGVAEAAGKTKEGVLYVGSKTKEGVVHGVTTVAEKTKEQVTNVGGAVVTGVTAVAQKTVEGAGNIAAATGFVRKDHLGKSEEGAPQEGILEDMPVDPDNEAYEMPSEEGYQDYEPEA</sequence>
<name>SYUA_SAGLB</name>
<reference key="1">
    <citation type="journal article" date="2004" name="Genomics">
        <title>Alpha-synuclein A53T substitution associated with Parkinson disease also marks the divergence of Old World and New World primates.</title>
        <authorList>
            <person name="Hamilton B.A."/>
        </authorList>
    </citation>
    <scope>NUCLEOTIDE SEQUENCE [GENOMIC DNA]</scope>
</reference>
<protein>
    <recommendedName>
        <fullName>Alpha-synuclein</fullName>
    </recommendedName>
</protein>
<dbReference type="EMBL" id="AY362329">
    <property type="protein sequence ID" value="AAQ85075.1"/>
    <property type="molecule type" value="Genomic_DNA"/>
</dbReference>
<dbReference type="EMBL" id="AY362325">
    <property type="protein sequence ID" value="AAQ85075.1"/>
    <property type="status" value="JOINED"/>
    <property type="molecule type" value="Genomic_DNA"/>
</dbReference>
<dbReference type="EMBL" id="AY362326">
    <property type="protein sequence ID" value="AAQ85075.1"/>
    <property type="status" value="JOINED"/>
    <property type="molecule type" value="Genomic_DNA"/>
</dbReference>
<dbReference type="EMBL" id="AY362327">
    <property type="protein sequence ID" value="AAQ85075.1"/>
    <property type="status" value="JOINED"/>
    <property type="molecule type" value="Genomic_DNA"/>
</dbReference>
<dbReference type="EMBL" id="AY362328">
    <property type="protein sequence ID" value="AAQ85075.1"/>
    <property type="status" value="JOINED"/>
    <property type="molecule type" value="Genomic_DNA"/>
</dbReference>
<dbReference type="GO" id="GO:0043679">
    <property type="term" value="C:axon terminus"/>
    <property type="evidence" value="ECO:0007669"/>
    <property type="project" value="TreeGrafter"/>
</dbReference>
<dbReference type="GO" id="GO:0005829">
    <property type="term" value="C:cytosol"/>
    <property type="evidence" value="ECO:0000250"/>
    <property type="project" value="UniProtKB"/>
</dbReference>
<dbReference type="GO" id="GO:0005615">
    <property type="term" value="C:extracellular space"/>
    <property type="evidence" value="ECO:0000250"/>
    <property type="project" value="UniProtKB"/>
</dbReference>
<dbReference type="GO" id="GO:0016020">
    <property type="term" value="C:membrane"/>
    <property type="evidence" value="ECO:0000250"/>
    <property type="project" value="UniProtKB"/>
</dbReference>
<dbReference type="GO" id="GO:0043025">
    <property type="term" value="C:neuronal cell body"/>
    <property type="evidence" value="ECO:0007669"/>
    <property type="project" value="TreeGrafter"/>
</dbReference>
<dbReference type="GO" id="GO:0005634">
    <property type="term" value="C:nucleus"/>
    <property type="evidence" value="ECO:0000250"/>
    <property type="project" value="UniProtKB"/>
</dbReference>
<dbReference type="GO" id="GO:0005507">
    <property type="term" value="F:copper ion binding"/>
    <property type="evidence" value="ECO:0000250"/>
    <property type="project" value="UniProtKB"/>
</dbReference>
<dbReference type="GO" id="GO:1903136">
    <property type="term" value="F:cuprous ion binding"/>
    <property type="evidence" value="ECO:0007669"/>
    <property type="project" value="TreeGrafter"/>
</dbReference>
<dbReference type="GO" id="GO:0042802">
    <property type="term" value="F:identical protein binding"/>
    <property type="evidence" value="ECO:0000250"/>
    <property type="project" value="UniProtKB"/>
</dbReference>
<dbReference type="GO" id="GO:0007268">
    <property type="term" value="P:chemical synaptic transmission"/>
    <property type="evidence" value="ECO:0007669"/>
    <property type="project" value="TreeGrafter"/>
</dbReference>
<dbReference type="GO" id="GO:0014059">
    <property type="term" value="P:regulation of dopamine secretion"/>
    <property type="evidence" value="ECO:0007669"/>
    <property type="project" value="InterPro"/>
</dbReference>
<dbReference type="GO" id="GO:0050808">
    <property type="term" value="P:synapse organization"/>
    <property type="evidence" value="ECO:0007669"/>
    <property type="project" value="TreeGrafter"/>
</dbReference>
<dbReference type="GO" id="GO:0048488">
    <property type="term" value="P:synaptic vesicle endocytosis"/>
    <property type="evidence" value="ECO:0007669"/>
    <property type="project" value="TreeGrafter"/>
</dbReference>
<dbReference type="FunFam" id="1.10.287.700:FF:000001">
    <property type="entry name" value="Alpha-synuclein"/>
    <property type="match status" value="1"/>
</dbReference>
<dbReference type="Gene3D" id="1.10.287.700">
    <property type="entry name" value="Helix hairpin bin"/>
    <property type="match status" value="1"/>
</dbReference>
<dbReference type="InterPro" id="IPR001058">
    <property type="entry name" value="Synuclein"/>
</dbReference>
<dbReference type="InterPro" id="IPR002460">
    <property type="entry name" value="Synuclein_alpha"/>
</dbReference>
<dbReference type="PANTHER" id="PTHR13820:SF5">
    <property type="entry name" value="ALPHA-SYNUCLEIN"/>
    <property type="match status" value="1"/>
</dbReference>
<dbReference type="PANTHER" id="PTHR13820">
    <property type="entry name" value="SYNUCLEIN"/>
    <property type="match status" value="1"/>
</dbReference>
<dbReference type="Pfam" id="PF01387">
    <property type="entry name" value="Synuclein"/>
    <property type="match status" value="1"/>
</dbReference>
<dbReference type="PRINTS" id="PR01212">
    <property type="entry name" value="ASYNUCLEIN"/>
</dbReference>
<dbReference type="PRINTS" id="PR01211">
    <property type="entry name" value="SYNUCLEIN"/>
</dbReference>
<dbReference type="SUPFAM" id="SSF118375">
    <property type="entry name" value="Synuclein"/>
    <property type="match status" value="1"/>
</dbReference>
<accession>P61147</accession>
<feature type="chain" id="PRO_0000184032" description="Alpha-synuclein">
    <location>
        <begin position="1"/>
        <end position="140"/>
    </location>
</feature>
<feature type="region of interest" description="Disordered" evidence="5">
    <location>
        <begin position="99"/>
        <end position="140"/>
    </location>
</feature>
<feature type="region of interest" description="Interaction with SERF1A" evidence="4">
    <location>
        <begin position="111"/>
        <end position="140"/>
    </location>
</feature>
<feature type="compositionally biased region" description="Acidic residues" evidence="5">
    <location>
        <begin position="112"/>
        <end position="140"/>
    </location>
</feature>
<feature type="binding site" evidence="1">
    <location>
        <position position="2"/>
    </location>
    <ligand>
        <name>Cu cation</name>
        <dbReference type="ChEBI" id="CHEBI:23378"/>
    </ligand>
</feature>
<feature type="binding site" evidence="1">
    <location>
        <position position="50"/>
    </location>
    <ligand>
        <name>Cu cation</name>
        <dbReference type="ChEBI" id="CHEBI:23378"/>
    </ligand>
</feature>
<feature type="modified residue" description="N-acetylmethionine" evidence="4">
    <location>
        <position position="1"/>
    </location>
</feature>
<feature type="modified residue" description="Phosphotyrosine" evidence="4">
    <location>
        <position position="125"/>
    </location>
</feature>
<feature type="modified residue" description="Phosphoserine; by PLK2" evidence="4">
    <location>
        <position position="129"/>
    </location>
</feature>
<organism>
    <name type="scientific">Saguinus labiatus</name>
    <name type="common">Red-chested mustached tamarin</name>
    <dbReference type="NCBI Taxonomy" id="78454"/>
    <lineage>
        <taxon>Eukaryota</taxon>
        <taxon>Metazoa</taxon>
        <taxon>Chordata</taxon>
        <taxon>Craniata</taxon>
        <taxon>Vertebrata</taxon>
        <taxon>Euteleostomi</taxon>
        <taxon>Mammalia</taxon>
        <taxon>Eutheria</taxon>
        <taxon>Euarchontoglires</taxon>
        <taxon>Primates</taxon>
        <taxon>Haplorrhini</taxon>
        <taxon>Platyrrhini</taxon>
        <taxon>Cebidae</taxon>
        <taxon>Callitrichinae</taxon>
        <taxon>Saguinus</taxon>
    </lineage>
</organism>
<evidence type="ECO:0000250" key="1"/>
<evidence type="ECO:0000250" key="2">
    <source>
        <dbReference type="UniProtKB" id="O55042"/>
    </source>
</evidence>
<evidence type="ECO:0000250" key="3">
    <source>
        <dbReference type="UniProtKB" id="P37377"/>
    </source>
</evidence>
<evidence type="ECO:0000250" key="4">
    <source>
        <dbReference type="UniProtKB" id="P37840"/>
    </source>
</evidence>
<evidence type="ECO:0000256" key="5">
    <source>
        <dbReference type="SAM" id="MobiDB-lite"/>
    </source>
</evidence>
<evidence type="ECO:0000305" key="6"/>
<gene>
    <name type="primary">SNCA</name>
</gene>